<evidence type="ECO:0000255" key="1">
    <source>
        <dbReference type="HAMAP-Rule" id="MF_00948"/>
    </source>
</evidence>
<gene>
    <name evidence="1" type="primary">nusG</name>
    <name type="ordered locus">SpyM3_0127</name>
</gene>
<keyword id="KW-0804">Transcription</keyword>
<keyword id="KW-0889">Transcription antitermination</keyword>
<keyword id="KW-0805">Transcription regulation</keyword>
<keyword id="KW-0806">Transcription termination</keyword>
<accession>P0DC78</accession>
<accession>P68894</accession>
<accession>P82547</accession>
<dbReference type="EMBL" id="AE014074">
    <property type="protein sequence ID" value="AAM78734.1"/>
    <property type="molecule type" value="Genomic_DNA"/>
</dbReference>
<dbReference type="RefSeq" id="WP_002987881.1">
    <property type="nucleotide sequence ID" value="NC_004070.1"/>
</dbReference>
<dbReference type="SMR" id="P0DC78"/>
<dbReference type="GeneID" id="83689799"/>
<dbReference type="KEGG" id="spg:SpyM3_0127"/>
<dbReference type="HOGENOM" id="CLU_067287_1_1_9"/>
<dbReference type="Proteomes" id="UP000000564">
    <property type="component" value="Chromosome"/>
</dbReference>
<dbReference type="GO" id="GO:0005829">
    <property type="term" value="C:cytosol"/>
    <property type="evidence" value="ECO:0007669"/>
    <property type="project" value="TreeGrafter"/>
</dbReference>
<dbReference type="GO" id="GO:0006353">
    <property type="term" value="P:DNA-templated transcription termination"/>
    <property type="evidence" value="ECO:0007669"/>
    <property type="project" value="UniProtKB-UniRule"/>
</dbReference>
<dbReference type="GO" id="GO:0032784">
    <property type="term" value="P:regulation of DNA-templated transcription elongation"/>
    <property type="evidence" value="ECO:0007669"/>
    <property type="project" value="InterPro"/>
</dbReference>
<dbReference type="GO" id="GO:0031564">
    <property type="term" value="P:transcription antitermination"/>
    <property type="evidence" value="ECO:0007669"/>
    <property type="project" value="UniProtKB-UniRule"/>
</dbReference>
<dbReference type="GO" id="GO:0140673">
    <property type="term" value="P:transcription elongation-coupled chromatin remodeling"/>
    <property type="evidence" value="ECO:0007669"/>
    <property type="project" value="InterPro"/>
</dbReference>
<dbReference type="CDD" id="cd06091">
    <property type="entry name" value="KOW_NusG"/>
    <property type="match status" value="1"/>
</dbReference>
<dbReference type="CDD" id="cd09891">
    <property type="entry name" value="NGN_Bact_1"/>
    <property type="match status" value="1"/>
</dbReference>
<dbReference type="FunFam" id="3.30.70.940:FF:000002">
    <property type="entry name" value="Transcription termination/antitermination protein NusG"/>
    <property type="match status" value="1"/>
</dbReference>
<dbReference type="Gene3D" id="2.30.30.30">
    <property type="match status" value="1"/>
</dbReference>
<dbReference type="Gene3D" id="3.30.70.940">
    <property type="entry name" value="NusG, N-terminal domain"/>
    <property type="match status" value="1"/>
</dbReference>
<dbReference type="HAMAP" id="MF_00948">
    <property type="entry name" value="NusG"/>
    <property type="match status" value="1"/>
</dbReference>
<dbReference type="InterPro" id="IPR005824">
    <property type="entry name" value="KOW"/>
</dbReference>
<dbReference type="InterPro" id="IPR047050">
    <property type="entry name" value="NGN"/>
</dbReference>
<dbReference type="InterPro" id="IPR006645">
    <property type="entry name" value="NGN-like_dom"/>
</dbReference>
<dbReference type="InterPro" id="IPR036735">
    <property type="entry name" value="NGN_dom_sf"/>
</dbReference>
<dbReference type="InterPro" id="IPR043425">
    <property type="entry name" value="NusG-like"/>
</dbReference>
<dbReference type="InterPro" id="IPR014722">
    <property type="entry name" value="Rib_uL2_dom2"/>
</dbReference>
<dbReference type="InterPro" id="IPR001062">
    <property type="entry name" value="Transcrpt_antiterm_NusG"/>
</dbReference>
<dbReference type="InterPro" id="IPR008991">
    <property type="entry name" value="Translation_prot_SH3-like_sf"/>
</dbReference>
<dbReference type="NCBIfam" id="TIGR00922">
    <property type="entry name" value="nusG"/>
    <property type="match status" value="1"/>
</dbReference>
<dbReference type="PANTHER" id="PTHR30265">
    <property type="entry name" value="RHO-INTERACTING TRANSCRIPTION TERMINATION FACTOR NUSG"/>
    <property type="match status" value="1"/>
</dbReference>
<dbReference type="PANTHER" id="PTHR30265:SF2">
    <property type="entry name" value="TRANSCRIPTION TERMINATION_ANTITERMINATION PROTEIN NUSG"/>
    <property type="match status" value="1"/>
</dbReference>
<dbReference type="Pfam" id="PF00467">
    <property type="entry name" value="KOW"/>
    <property type="match status" value="1"/>
</dbReference>
<dbReference type="Pfam" id="PF02357">
    <property type="entry name" value="NusG"/>
    <property type="match status" value="1"/>
</dbReference>
<dbReference type="PRINTS" id="PR00338">
    <property type="entry name" value="NUSGTNSCPFCT"/>
</dbReference>
<dbReference type="SMART" id="SM00739">
    <property type="entry name" value="KOW"/>
    <property type="match status" value="1"/>
</dbReference>
<dbReference type="SMART" id="SM00738">
    <property type="entry name" value="NGN"/>
    <property type="match status" value="1"/>
</dbReference>
<dbReference type="SUPFAM" id="SSF82679">
    <property type="entry name" value="N-utilization substance G protein NusG, N-terminal domain"/>
    <property type="match status" value="1"/>
</dbReference>
<dbReference type="SUPFAM" id="SSF50104">
    <property type="entry name" value="Translation proteins SH3-like domain"/>
    <property type="match status" value="1"/>
</dbReference>
<name>NUSG_STRP3</name>
<reference key="1">
    <citation type="journal article" date="2002" name="Proc. Natl. Acad. Sci. U.S.A.">
        <title>Genome sequence of a serotype M3 strain of group A Streptococcus: phage-encoded toxins, the high-virulence phenotype, and clone emergence.</title>
        <authorList>
            <person name="Beres S.B."/>
            <person name="Sylva G.L."/>
            <person name="Barbian K.D."/>
            <person name="Lei B."/>
            <person name="Hoff J.S."/>
            <person name="Mammarella N.D."/>
            <person name="Liu M.-Y."/>
            <person name="Smoot J.C."/>
            <person name="Porcella S.F."/>
            <person name="Parkins L.D."/>
            <person name="Campbell D.S."/>
            <person name="Smith T.M."/>
            <person name="McCormick J.K."/>
            <person name="Leung D.Y.M."/>
            <person name="Schlievert P.M."/>
            <person name="Musser J.M."/>
        </authorList>
    </citation>
    <scope>NUCLEOTIDE SEQUENCE [LARGE SCALE GENOMIC DNA]</scope>
    <source>
        <strain>ATCC BAA-595 / MGAS315</strain>
    </source>
</reference>
<comment type="function">
    <text evidence="1">Participates in transcription elongation, termination and antitermination.</text>
</comment>
<comment type="similarity">
    <text evidence="1">Belongs to the NusG family.</text>
</comment>
<proteinExistence type="inferred from homology"/>
<organism>
    <name type="scientific">Streptococcus pyogenes serotype M3 (strain ATCC BAA-595 / MGAS315)</name>
    <dbReference type="NCBI Taxonomy" id="198466"/>
    <lineage>
        <taxon>Bacteria</taxon>
        <taxon>Bacillati</taxon>
        <taxon>Bacillota</taxon>
        <taxon>Bacilli</taxon>
        <taxon>Lactobacillales</taxon>
        <taxon>Streptococcaceae</taxon>
        <taxon>Streptococcus</taxon>
    </lineage>
</organism>
<feature type="chain" id="PRO_0000113960" description="Transcription termination/antitermination protein NusG">
    <location>
        <begin position="1"/>
        <end position="179"/>
    </location>
</feature>
<feature type="domain" description="KOW" evidence="1">
    <location>
        <begin position="130"/>
        <end position="157"/>
    </location>
</feature>
<protein>
    <recommendedName>
        <fullName evidence="1">Transcription termination/antitermination protein NusG</fullName>
    </recommendedName>
</protein>
<sequence>MLDSFDKGWFVLQTYSGYENKVKENLLQRAQTYNMLDNILRVEIPTQTVNVEKNGQTKEIEENRFPGYVLVEMVMTDEAWFVVRNTPNVTGFVGSHGNRSKPTPLLEEEIRAILLSMGQTIDVFDTNIKEGDVVQIIDGAFMGQEGRVVEIENNKVKLMLNMFGSETVAEVELYQIAEL</sequence>